<feature type="chain" id="PRO_1000141544" description="Large ribosomal subunit protein uL2">
    <location>
        <begin position="1"/>
        <end position="273"/>
    </location>
</feature>
<feature type="region of interest" description="Disordered" evidence="2">
    <location>
        <begin position="28"/>
        <end position="53"/>
    </location>
</feature>
<feature type="region of interest" description="Disordered" evidence="2">
    <location>
        <begin position="221"/>
        <end position="273"/>
    </location>
</feature>
<feature type="compositionally biased region" description="Low complexity" evidence="2">
    <location>
        <begin position="39"/>
        <end position="48"/>
    </location>
</feature>
<feature type="modified residue" description="N6-acetyllysine" evidence="1">
    <location>
        <position position="242"/>
    </location>
</feature>
<keyword id="KW-0007">Acetylation</keyword>
<keyword id="KW-0687">Ribonucleoprotein</keyword>
<keyword id="KW-0689">Ribosomal protein</keyword>
<keyword id="KW-0694">RNA-binding</keyword>
<keyword id="KW-0699">rRNA-binding</keyword>
<dbReference type="EMBL" id="CP001164">
    <property type="protein sequence ID" value="ACI34733.1"/>
    <property type="molecule type" value="Genomic_DNA"/>
</dbReference>
<dbReference type="RefSeq" id="WP_000301864.1">
    <property type="nucleotide sequence ID" value="NC_011353.1"/>
</dbReference>
<dbReference type="SMR" id="B5YTN8"/>
<dbReference type="GeneID" id="93778670"/>
<dbReference type="KEGG" id="ecf:ECH74115_4640"/>
<dbReference type="HOGENOM" id="CLU_036235_2_1_6"/>
<dbReference type="GO" id="GO:0005829">
    <property type="term" value="C:cytosol"/>
    <property type="evidence" value="ECO:0007669"/>
    <property type="project" value="UniProtKB-ARBA"/>
</dbReference>
<dbReference type="GO" id="GO:0015934">
    <property type="term" value="C:large ribosomal subunit"/>
    <property type="evidence" value="ECO:0007669"/>
    <property type="project" value="InterPro"/>
</dbReference>
<dbReference type="GO" id="GO:0019843">
    <property type="term" value="F:rRNA binding"/>
    <property type="evidence" value="ECO:0007669"/>
    <property type="project" value="UniProtKB-UniRule"/>
</dbReference>
<dbReference type="GO" id="GO:0003735">
    <property type="term" value="F:structural constituent of ribosome"/>
    <property type="evidence" value="ECO:0007669"/>
    <property type="project" value="InterPro"/>
</dbReference>
<dbReference type="GO" id="GO:0016740">
    <property type="term" value="F:transferase activity"/>
    <property type="evidence" value="ECO:0007669"/>
    <property type="project" value="InterPro"/>
</dbReference>
<dbReference type="GO" id="GO:0002181">
    <property type="term" value="P:cytoplasmic translation"/>
    <property type="evidence" value="ECO:0007669"/>
    <property type="project" value="TreeGrafter"/>
</dbReference>
<dbReference type="FunFam" id="2.30.30.30:FF:000001">
    <property type="entry name" value="50S ribosomal protein L2"/>
    <property type="match status" value="1"/>
</dbReference>
<dbReference type="FunFam" id="2.40.50.140:FF:000003">
    <property type="entry name" value="50S ribosomal protein L2"/>
    <property type="match status" value="1"/>
</dbReference>
<dbReference type="FunFam" id="4.10.950.10:FF:000001">
    <property type="entry name" value="50S ribosomal protein L2"/>
    <property type="match status" value="1"/>
</dbReference>
<dbReference type="Gene3D" id="2.30.30.30">
    <property type="match status" value="1"/>
</dbReference>
<dbReference type="Gene3D" id="2.40.50.140">
    <property type="entry name" value="Nucleic acid-binding proteins"/>
    <property type="match status" value="1"/>
</dbReference>
<dbReference type="Gene3D" id="4.10.950.10">
    <property type="entry name" value="Ribosomal protein L2, domain 3"/>
    <property type="match status" value="1"/>
</dbReference>
<dbReference type="HAMAP" id="MF_01320_B">
    <property type="entry name" value="Ribosomal_uL2_B"/>
    <property type="match status" value="1"/>
</dbReference>
<dbReference type="InterPro" id="IPR012340">
    <property type="entry name" value="NA-bd_OB-fold"/>
</dbReference>
<dbReference type="InterPro" id="IPR014722">
    <property type="entry name" value="Rib_uL2_dom2"/>
</dbReference>
<dbReference type="InterPro" id="IPR002171">
    <property type="entry name" value="Ribosomal_uL2"/>
</dbReference>
<dbReference type="InterPro" id="IPR005880">
    <property type="entry name" value="Ribosomal_uL2_bac/org-type"/>
</dbReference>
<dbReference type="InterPro" id="IPR022669">
    <property type="entry name" value="Ribosomal_uL2_C"/>
</dbReference>
<dbReference type="InterPro" id="IPR022671">
    <property type="entry name" value="Ribosomal_uL2_CS"/>
</dbReference>
<dbReference type="InterPro" id="IPR014726">
    <property type="entry name" value="Ribosomal_uL2_dom3"/>
</dbReference>
<dbReference type="InterPro" id="IPR022666">
    <property type="entry name" value="Ribosomal_uL2_RNA-bd_dom"/>
</dbReference>
<dbReference type="InterPro" id="IPR008991">
    <property type="entry name" value="Translation_prot_SH3-like_sf"/>
</dbReference>
<dbReference type="NCBIfam" id="TIGR01171">
    <property type="entry name" value="rplB_bact"/>
    <property type="match status" value="1"/>
</dbReference>
<dbReference type="PANTHER" id="PTHR13691:SF5">
    <property type="entry name" value="LARGE RIBOSOMAL SUBUNIT PROTEIN UL2M"/>
    <property type="match status" value="1"/>
</dbReference>
<dbReference type="PANTHER" id="PTHR13691">
    <property type="entry name" value="RIBOSOMAL PROTEIN L2"/>
    <property type="match status" value="1"/>
</dbReference>
<dbReference type="Pfam" id="PF00181">
    <property type="entry name" value="Ribosomal_L2"/>
    <property type="match status" value="1"/>
</dbReference>
<dbReference type="Pfam" id="PF03947">
    <property type="entry name" value="Ribosomal_L2_C"/>
    <property type="match status" value="1"/>
</dbReference>
<dbReference type="PIRSF" id="PIRSF002158">
    <property type="entry name" value="Ribosomal_L2"/>
    <property type="match status" value="1"/>
</dbReference>
<dbReference type="SMART" id="SM01383">
    <property type="entry name" value="Ribosomal_L2"/>
    <property type="match status" value="1"/>
</dbReference>
<dbReference type="SMART" id="SM01382">
    <property type="entry name" value="Ribosomal_L2_C"/>
    <property type="match status" value="1"/>
</dbReference>
<dbReference type="SUPFAM" id="SSF50249">
    <property type="entry name" value="Nucleic acid-binding proteins"/>
    <property type="match status" value="1"/>
</dbReference>
<dbReference type="SUPFAM" id="SSF50104">
    <property type="entry name" value="Translation proteins SH3-like domain"/>
    <property type="match status" value="1"/>
</dbReference>
<dbReference type="PROSITE" id="PS00467">
    <property type="entry name" value="RIBOSOMAL_L2"/>
    <property type="match status" value="1"/>
</dbReference>
<sequence length="273" mass="29860">MAVVKCKPTSPGRRHVVKVVNPELHKGKPFAPLLEKNSKSGGRNNNGRITTRHIGGGHKQAYRIVDFKRNKDGIPAVVERLEYDPNRSANIALVLYKDGERRYILAPKGLKAGDQIQSGVDAAIKPGNTLPMRNIPVGSTVHNVEMKPGKGGQLARSAGTYVQIVARDGAYVTLRLRSGEMRKVEADCRATLGEVGNAEHMLRVLGKAGAARWRGVRPTVRGTAMNPVDHPHGGGEGRNFGKHPVTPWGVQTKGKKTRSNKRTDKFIVRRRSK</sequence>
<protein>
    <recommendedName>
        <fullName evidence="1">Large ribosomal subunit protein uL2</fullName>
    </recommendedName>
    <alternativeName>
        <fullName evidence="3">50S ribosomal protein L2</fullName>
    </alternativeName>
</protein>
<proteinExistence type="inferred from homology"/>
<evidence type="ECO:0000255" key="1">
    <source>
        <dbReference type="HAMAP-Rule" id="MF_01320"/>
    </source>
</evidence>
<evidence type="ECO:0000256" key="2">
    <source>
        <dbReference type="SAM" id="MobiDB-lite"/>
    </source>
</evidence>
<evidence type="ECO:0000305" key="3"/>
<name>RL2_ECO5E</name>
<gene>
    <name evidence="1" type="primary">rplB</name>
    <name type="ordered locus">ECH74115_4640</name>
</gene>
<reference key="1">
    <citation type="journal article" date="2011" name="Proc. Natl. Acad. Sci. U.S.A.">
        <title>Genomic anatomy of Escherichia coli O157:H7 outbreaks.</title>
        <authorList>
            <person name="Eppinger M."/>
            <person name="Mammel M.K."/>
            <person name="Leclerc J.E."/>
            <person name="Ravel J."/>
            <person name="Cebula T.A."/>
        </authorList>
    </citation>
    <scope>NUCLEOTIDE SEQUENCE [LARGE SCALE GENOMIC DNA]</scope>
    <source>
        <strain>EC4115 / EHEC</strain>
    </source>
</reference>
<organism>
    <name type="scientific">Escherichia coli O157:H7 (strain EC4115 / EHEC)</name>
    <dbReference type="NCBI Taxonomy" id="444450"/>
    <lineage>
        <taxon>Bacteria</taxon>
        <taxon>Pseudomonadati</taxon>
        <taxon>Pseudomonadota</taxon>
        <taxon>Gammaproteobacteria</taxon>
        <taxon>Enterobacterales</taxon>
        <taxon>Enterobacteriaceae</taxon>
        <taxon>Escherichia</taxon>
    </lineage>
</organism>
<comment type="function">
    <text evidence="1">One of the primary rRNA binding proteins. Required for association of the 30S and 50S subunits to form the 70S ribosome, for tRNA binding and peptide bond formation. It has been suggested to have peptidyltransferase activity; this is somewhat controversial. Makes several contacts with the 16S rRNA in the 70S ribosome.</text>
</comment>
<comment type="subunit">
    <text evidence="1">Part of the 50S ribosomal subunit. Forms a bridge to the 30S subunit in the 70S ribosome.</text>
</comment>
<comment type="similarity">
    <text evidence="1">Belongs to the universal ribosomal protein uL2 family.</text>
</comment>
<accession>B5YTN8</accession>